<reference key="1">
    <citation type="submission" date="2003-03" db="EMBL/GenBank/DDBJ databases">
        <title>African swine fever virus genomes.</title>
        <authorList>
            <person name="Kutish G.F."/>
            <person name="Rock D.L."/>
        </authorList>
    </citation>
    <scope>NUCLEOTIDE SEQUENCE [LARGE SCALE GENOMIC DNA]</scope>
</reference>
<proteinExistence type="inferred from homology"/>
<organismHost>
    <name type="scientific">Ornithodoros</name>
    <name type="common">relapsing fever ticks</name>
    <dbReference type="NCBI Taxonomy" id="6937"/>
</organismHost>
<organismHost>
    <name type="scientific">Phacochoerus aethiopicus</name>
    <name type="common">Warthog</name>
    <dbReference type="NCBI Taxonomy" id="85517"/>
</organismHost>
<organismHost>
    <name type="scientific">Phacochoerus africanus</name>
    <name type="common">Warthog</name>
    <dbReference type="NCBI Taxonomy" id="41426"/>
</organismHost>
<organismHost>
    <name type="scientific">Potamochoerus larvatus</name>
    <name type="common">Bushpig</name>
    <dbReference type="NCBI Taxonomy" id="273792"/>
</organismHost>
<organismHost>
    <name type="scientific">Sus scrofa</name>
    <name type="common">Pig</name>
    <dbReference type="NCBI Taxonomy" id="9823"/>
</organismHost>
<keyword id="KW-0244">Early protein</keyword>
<keyword id="KW-0489">Methyltransferase</keyword>
<keyword id="KW-0949">S-adenosyl-L-methionine</keyword>
<keyword id="KW-0808">Transferase</keyword>
<keyword id="KW-0946">Virion</keyword>
<sequence>MSNYYYYYGGGRYDWLKTVEPTNFLKIGLPYQAHPLHLQHQTTTPPSILEKFKRADILLNEVKAEMDPLMLQPETEKKLFQILSSIDMFKGLRKKVEFTYNAQIVTNAWLKMYELLNTMNFNNTSQAFCNCELPGGFISAINHFNYTMMHYPTFNWVASSLYPSSETDALEDHYGLYQCNPDNWLMQSPLLKKNMDYNNGDVTIASNVKNLALRATQRLTPIHLYTADGGINVGHDYNKQEELNLKLHFGQALTGLLSLSKGGNMILKHYTLNHAFTLSLICVFSHFFEELYITKPTSSRPTNSETYIVGKNRLRLFTPKEEQVLLKRLEFFNDTPLVDLSLYQNLLESVYFAVETIHLKQQIEFLNFGMKCYRHFYNKIKLLNDYLAPKKKIFQDRWRVLNKLYVLEKKHKLKLCAASQGSVA</sequence>
<protein>
    <recommendedName>
        <fullName>Probable methyltransferase EP424R</fullName>
        <shortName>pEP424R</shortName>
        <ecNumber>2.1.1.-</ecNumber>
    </recommendedName>
</protein>
<dbReference type="EC" id="2.1.1.-"/>
<dbReference type="EMBL" id="AY261366">
    <property type="status" value="NOT_ANNOTATED_CDS"/>
    <property type="molecule type" value="Genomic_DNA"/>
</dbReference>
<dbReference type="SMR" id="P0C967"/>
<dbReference type="Proteomes" id="UP000000858">
    <property type="component" value="Segment"/>
</dbReference>
<dbReference type="GO" id="GO:0044423">
    <property type="term" value="C:virion component"/>
    <property type="evidence" value="ECO:0007669"/>
    <property type="project" value="UniProtKB-KW"/>
</dbReference>
<dbReference type="GO" id="GO:0004483">
    <property type="term" value="F:mRNA (nucleoside-2'-O-)-methyltransferase activity"/>
    <property type="evidence" value="ECO:0007669"/>
    <property type="project" value="UniProtKB-ARBA"/>
</dbReference>
<dbReference type="GO" id="GO:0006370">
    <property type="term" value="P:7-methylguanosine mRNA capping"/>
    <property type="evidence" value="ECO:0007669"/>
    <property type="project" value="TreeGrafter"/>
</dbReference>
<dbReference type="GO" id="GO:0032259">
    <property type="term" value="P:methylation"/>
    <property type="evidence" value="ECO:0007669"/>
    <property type="project" value="UniProtKB-KW"/>
</dbReference>
<dbReference type="Gene3D" id="3.40.50.12760">
    <property type="match status" value="1"/>
</dbReference>
<dbReference type="InterPro" id="IPR025807">
    <property type="entry name" value="Adrift-typ_MeTrfase"/>
</dbReference>
<dbReference type="InterPro" id="IPR050851">
    <property type="entry name" value="mRNA_Cap_2O-Ribose_MeTrfase"/>
</dbReference>
<dbReference type="InterPro" id="IPR002877">
    <property type="entry name" value="RNA_MeTrfase_FtsJ_dom"/>
</dbReference>
<dbReference type="InterPro" id="IPR029063">
    <property type="entry name" value="SAM-dependent_MTases_sf"/>
</dbReference>
<dbReference type="PANTHER" id="PTHR16121">
    <property type="entry name" value="CAP-SPECIFIC MRNA (NUCLEOSIDE-2'-O-)-METHYLTRANSFERASE 1-RELATED"/>
    <property type="match status" value="1"/>
</dbReference>
<dbReference type="Pfam" id="PF01728">
    <property type="entry name" value="FtsJ"/>
    <property type="match status" value="1"/>
</dbReference>
<dbReference type="SUPFAM" id="SSF53335">
    <property type="entry name" value="S-adenosyl-L-methionine-dependent methyltransferases"/>
    <property type="match status" value="1"/>
</dbReference>
<dbReference type="PROSITE" id="PS51614">
    <property type="entry name" value="SAM_MT_ADRIFT"/>
    <property type="match status" value="1"/>
</dbReference>
<name>VF424_ASFWA</name>
<gene>
    <name type="ordered locus">War-065</name>
</gene>
<feature type="chain" id="PRO_0000373066" description="Probable methyltransferase EP424R">
    <location>
        <begin position="1"/>
        <end position="424"/>
    </location>
</feature>
<feature type="domain" description="Adrift-type SAM-dependent 2'-O-MTase" evidence="2">
    <location>
        <begin position="103"/>
        <end position="315"/>
    </location>
</feature>
<feature type="active site" description="Proton acceptor" evidence="2">
    <location>
        <position position="268"/>
    </location>
</feature>
<feature type="binding site" evidence="2">
    <location>
        <position position="135"/>
    </location>
    <ligand>
        <name>S-adenosyl-L-methionine</name>
        <dbReference type="ChEBI" id="CHEBI:59789"/>
    </ligand>
</feature>
<feature type="binding site" evidence="2">
    <location>
        <position position="228"/>
    </location>
    <ligand>
        <name>S-adenosyl-L-methionine</name>
        <dbReference type="ChEBI" id="CHEBI:59789"/>
    </ligand>
</feature>
<evidence type="ECO:0000250" key="1">
    <source>
        <dbReference type="UniProtKB" id="Q65148"/>
    </source>
</evidence>
<evidence type="ECO:0000255" key="2">
    <source>
        <dbReference type="PROSITE-ProRule" id="PRU00946"/>
    </source>
</evidence>
<evidence type="ECO:0000305" key="3"/>
<comment type="subcellular location">
    <subcellularLocation>
        <location evidence="1">Virion</location>
    </subcellularLocation>
</comment>
<comment type="induction">
    <text evidence="3">Expressed in the early phase of the viral replicative cycle.</text>
</comment>
<accession>P0C967</accession>
<organism>
    <name type="scientific">African swine fever virus (isolate Warthog/Namibia/Wart80/1980)</name>
    <name type="common">ASFV</name>
    <dbReference type="NCBI Taxonomy" id="561444"/>
    <lineage>
        <taxon>Viruses</taxon>
        <taxon>Varidnaviria</taxon>
        <taxon>Bamfordvirae</taxon>
        <taxon>Nucleocytoviricota</taxon>
        <taxon>Pokkesviricetes</taxon>
        <taxon>Asfuvirales</taxon>
        <taxon>Asfarviridae</taxon>
        <taxon>Asfivirus</taxon>
        <taxon>African swine fever virus</taxon>
    </lineage>
</organism>